<keyword id="KW-1003">Cell membrane</keyword>
<keyword id="KW-0406">Ion transport</keyword>
<keyword id="KW-0464">Manganese</keyword>
<keyword id="KW-0472">Membrane</keyword>
<keyword id="KW-1185">Reference proteome</keyword>
<keyword id="KW-0812">Transmembrane</keyword>
<keyword id="KW-1133">Transmembrane helix</keyword>
<keyword id="KW-0813">Transport</keyword>
<gene>
    <name evidence="1" type="primary">mntP2</name>
    <name type="ordered locus">CBO1290</name>
    <name type="ordered locus">CLC_1328</name>
</gene>
<proteinExistence type="inferred from homology"/>
<reference key="1">
    <citation type="journal article" date="2007" name="Genome Res.">
        <title>Genome sequence of a proteolytic (Group I) Clostridium botulinum strain Hall A and comparative analysis of the clostridial genomes.</title>
        <authorList>
            <person name="Sebaihia M."/>
            <person name="Peck M.W."/>
            <person name="Minton N.P."/>
            <person name="Thomson N.R."/>
            <person name="Holden M.T.G."/>
            <person name="Mitchell W.J."/>
            <person name="Carter A.T."/>
            <person name="Bentley S.D."/>
            <person name="Mason D.R."/>
            <person name="Crossman L."/>
            <person name="Paul C.J."/>
            <person name="Ivens A."/>
            <person name="Wells-Bennik M.H.J."/>
            <person name="Davis I.J."/>
            <person name="Cerdeno-Tarraga A.M."/>
            <person name="Churcher C."/>
            <person name="Quail M.A."/>
            <person name="Chillingworth T."/>
            <person name="Feltwell T."/>
            <person name="Fraser A."/>
            <person name="Goodhead I."/>
            <person name="Hance Z."/>
            <person name="Jagels K."/>
            <person name="Larke N."/>
            <person name="Maddison M."/>
            <person name="Moule S."/>
            <person name="Mungall K."/>
            <person name="Norbertczak H."/>
            <person name="Rabbinowitsch E."/>
            <person name="Sanders M."/>
            <person name="Simmonds M."/>
            <person name="White B."/>
            <person name="Whithead S."/>
            <person name="Parkhill J."/>
        </authorList>
    </citation>
    <scope>NUCLEOTIDE SEQUENCE [LARGE SCALE GENOMIC DNA]</scope>
    <source>
        <strain>Hall / ATCC 3502 / NCTC 13319 / Type A</strain>
    </source>
</reference>
<reference key="2">
    <citation type="journal article" date="2007" name="PLoS ONE">
        <title>Analysis of the neurotoxin complex genes in Clostridium botulinum A1-A4 and B1 strains: BoNT/A3, /Ba4 and /B1 clusters are located within plasmids.</title>
        <authorList>
            <person name="Smith T.J."/>
            <person name="Hill K.K."/>
            <person name="Foley B.T."/>
            <person name="Detter J.C."/>
            <person name="Munk A.C."/>
            <person name="Bruce D.C."/>
            <person name="Doggett N.A."/>
            <person name="Smith L.A."/>
            <person name="Marks J.D."/>
            <person name="Xie G."/>
            <person name="Brettin T.S."/>
        </authorList>
    </citation>
    <scope>NUCLEOTIDE SEQUENCE [LARGE SCALE GENOMIC DNA]</scope>
    <source>
        <strain>Hall / ATCC 3502 / NCTC 13319 / Type A</strain>
    </source>
</reference>
<protein>
    <recommendedName>
        <fullName evidence="1">Putative manganese efflux pump MntP 2</fullName>
    </recommendedName>
</protein>
<name>MNTP2_CLOBH</name>
<evidence type="ECO:0000255" key="1">
    <source>
        <dbReference type="HAMAP-Rule" id="MF_01521"/>
    </source>
</evidence>
<dbReference type="EMBL" id="CP000727">
    <property type="protein sequence ID" value="ABS38815.1"/>
    <property type="molecule type" value="Genomic_DNA"/>
</dbReference>
<dbReference type="EMBL" id="AM412317">
    <property type="protein sequence ID" value="CAL82839.1"/>
    <property type="molecule type" value="Genomic_DNA"/>
</dbReference>
<dbReference type="RefSeq" id="WP_011948910.1">
    <property type="nucleotide sequence ID" value="NC_009698.1"/>
</dbReference>
<dbReference type="RefSeq" id="YP_001253812.1">
    <property type="nucleotide sequence ID" value="NC_009495.1"/>
</dbReference>
<dbReference type="RefSeq" id="YP_001387194.1">
    <property type="nucleotide sequence ID" value="NC_009698.1"/>
</dbReference>
<dbReference type="GeneID" id="5185545"/>
<dbReference type="KEGG" id="cbh:CLC_1328"/>
<dbReference type="KEGG" id="cbo:CBO1290"/>
<dbReference type="PATRIC" id="fig|413999.7.peg.1276"/>
<dbReference type="HOGENOM" id="CLU_096410_3_0_9"/>
<dbReference type="PRO" id="PR:A5I1C7"/>
<dbReference type="Proteomes" id="UP000001986">
    <property type="component" value="Chromosome"/>
</dbReference>
<dbReference type="GO" id="GO:0005886">
    <property type="term" value="C:plasma membrane"/>
    <property type="evidence" value="ECO:0000318"/>
    <property type="project" value="GO_Central"/>
</dbReference>
<dbReference type="GO" id="GO:0005384">
    <property type="term" value="F:manganese ion transmembrane transporter activity"/>
    <property type="evidence" value="ECO:0000318"/>
    <property type="project" value="GO_Central"/>
</dbReference>
<dbReference type="GO" id="GO:0030026">
    <property type="term" value="P:intracellular manganese ion homeostasis"/>
    <property type="evidence" value="ECO:0000318"/>
    <property type="project" value="GO_Central"/>
</dbReference>
<dbReference type="GO" id="GO:0140048">
    <property type="term" value="P:manganese ion export across plasma membrane"/>
    <property type="evidence" value="ECO:0000318"/>
    <property type="project" value="GO_Central"/>
</dbReference>
<dbReference type="HAMAP" id="MF_01521">
    <property type="entry name" value="MntP_pump"/>
    <property type="match status" value="1"/>
</dbReference>
<dbReference type="InterPro" id="IPR036259">
    <property type="entry name" value="MFS_trans_sf"/>
</dbReference>
<dbReference type="InterPro" id="IPR003810">
    <property type="entry name" value="Mntp/YtaF"/>
</dbReference>
<dbReference type="InterPro" id="IPR022929">
    <property type="entry name" value="Put_MntP"/>
</dbReference>
<dbReference type="PANTHER" id="PTHR35529">
    <property type="entry name" value="MANGANESE EFFLUX PUMP MNTP-RELATED"/>
    <property type="match status" value="1"/>
</dbReference>
<dbReference type="PANTHER" id="PTHR35529:SF1">
    <property type="entry name" value="MANGANESE EFFLUX PUMP MNTP-RELATED"/>
    <property type="match status" value="1"/>
</dbReference>
<dbReference type="Pfam" id="PF02659">
    <property type="entry name" value="Mntp"/>
    <property type="match status" value="1"/>
</dbReference>
<dbReference type="SUPFAM" id="SSF103473">
    <property type="entry name" value="MFS general substrate transporter"/>
    <property type="match status" value="1"/>
</dbReference>
<comment type="function">
    <text evidence="1">Probably functions as a manganese efflux pump.</text>
</comment>
<comment type="subcellular location">
    <subcellularLocation>
        <location evidence="1">Cell membrane</location>
        <topology evidence="1">Multi-pass membrane protein</topology>
    </subcellularLocation>
</comment>
<comment type="similarity">
    <text evidence="1">Belongs to the MntP (TC 9.B.29) family.</text>
</comment>
<sequence length="201" mass="21655">MDLISVILISIGLSMDAFAVSITNGAMISKVTASEGIRIGLFFGGFQALMPLIGWSIGIKFESYIAALDHWIALILLSIIGGKMIYDSVKENQDHKDEIACDYAAGEKKCLNNKTLILLAIATSIDALAVGVSFAFLKVSIINTIIIIGSITFVICFIGVMIGKKCGKLLKKRAEILGGVVLILIGVKIFIQHTNILSYIF</sequence>
<organism>
    <name type="scientific">Clostridium botulinum (strain Hall / ATCC 3502 / NCTC 13319 / Type A)</name>
    <dbReference type="NCBI Taxonomy" id="441771"/>
    <lineage>
        <taxon>Bacteria</taxon>
        <taxon>Bacillati</taxon>
        <taxon>Bacillota</taxon>
        <taxon>Clostridia</taxon>
        <taxon>Eubacteriales</taxon>
        <taxon>Clostridiaceae</taxon>
        <taxon>Clostridium</taxon>
    </lineage>
</organism>
<feature type="chain" id="PRO_0000315563" description="Putative manganese efflux pump MntP 2">
    <location>
        <begin position="1"/>
        <end position="201"/>
    </location>
</feature>
<feature type="transmembrane region" description="Helical" evidence="1">
    <location>
        <begin position="3"/>
        <end position="23"/>
    </location>
</feature>
<feature type="transmembrane region" description="Helical" evidence="1">
    <location>
        <begin position="39"/>
        <end position="59"/>
    </location>
</feature>
<feature type="transmembrane region" description="Helical" evidence="1">
    <location>
        <begin position="65"/>
        <end position="85"/>
    </location>
</feature>
<feature type="transmembrane region" description="Helical" evidence="1">
    <location>
        <begin position="116"/>
        <end position="136"/>
    </location>
</feature>
<feature type="transmembrane region" description="Helical" evidence="1">
    <location>
        <begin position="141"/>
        <end position="161"/>
    </location>
</feature>
<feature type="transmembrane region" description="Helical" evidence="1">
    <location>
        <begin position="176"/>
        <end position="196"/>
    </location>
</feature>
<accession>A5I1C7</accession>
<accession>A7G329</accession>